<gene>
    <name evidence="1" type="primary">gatB</name>
    <name type="ordered locus">HPAG1_0643</name>
</gene>
<evidence type="ECO:0000255" key="1">
    <source>
        <dbReference type="HAMAP-Rule" id="MF_00121"/>
    </source>
</evidence>
<name>GATB_HELPH</name>
<sequence length="475" mass="53178">MMPFEAVIGLEVHVQLNTKTKIFCSCSTSFGESPNSNTCPVCLGLPGALPVLNKEVVKKAIQLGTAIEANINQYSIFARKNYFYPDLPKAYQISQFEVPIVSDGKLEIDTKDGAKIVRIERVHMEEDAGKNIHEGSYSLVDLNRACTPLLEIVSKPDMRNSEEAIAYLKKLHAIVRFIGISDANMQEGNFRCDANVSIRPKGDEKLYTRVEIKNLNSFRFIAKAIEYEIERQSAAWESGRYHEEVVQETRLFDTAKGITLSMRNKEESADYRYFKDPDLYPVFIDEKLLKEAQKINELPGAKKIRYVRDFNLKEDDANLLVSDPLLAEYFESMLNLGVKAKTSVTWLCVELLGRLKAETTLENCGVSAHMLGALAKRIDEGKISGKSAKDVLDKLLEEKGGDVDALIEQMGLSQVNDTEAIVKVVEEVLKNNADKVLEYKSGKDKLFGFFVGQAMKNLKGANPSVVNAILKEKLD</sequence>
<protein>
    <recommendedName>
        <fullName evidence="1">Aspartyl/glutamyl-tRNA(Asn/Gln) amidotransferase subunit B</fullName>
        <shortName evidence="1">Asp/Glu-ADT subunit B</shortName>
        <ecNumber evidence="1">6.3.5.-</ecNumber>
    </recommendedName>
</protein>
<feature type="chain" id="PRO_1000071373" description="Aspartyl/glutamyl-tRNA(Asn/Gln) amidotransferase subunit B">
    <location>
        <begin position="1"/>
        <end position="475"/>
    </location>
</feature>
<proteinExistence type="inferred from homology"/>
<reference key="1">
    <citation type="journal article" date="2006" name="Proc. Natl. Acad. Sci. U.S.A.">
        <title>The complete genome sequence of a chronic atrophic gastritis Helicobacter pylori strain: evolution during disease progression.</title>
        <authorList>
            <person name="Oh J.D."/>
            <person name="Kling-Baeckhed H."/>
            <person name="Giannakis M."/>
            <person name="Xu J."/>
            <person name="Fulton R.S."/>
            <person name="Fulton L.A."/>
            <person name="Cordum H.S."/>
            <person name="Wang C."/>
            <person name="Elliott G."/>
            <person name="Edwards J."/>
            <person name="Mardis E.R."/>
            <person name="Engstrand L.G."/>
            <person name="Gordon J.I."/>
        </authorList>
    </citation>
    <scope>NUCLEOTIDE SEQUENCE [LARGE SCALE GENOMIC DNA]</scope>
    <source>
        <strain>HPAG1</strain>
    </source>
</reference>
<comment type="function">
    <text evidence="1">Allows the formation of correctly charged Asn-tRNA(Asn) or Gln-tRNA(Gln) through the transamidation of misacylated Asp-tRNA(Asn) or Glu-tRNA(Gln) in organisms which lack either or both of asparaginyl-tRNA or glutaminyl-tRNA synthetases. The reaction takes place in the presence of glutamine and ATP through an activated phospho-Asp-tRNA(Asn) or phospho-Glu-tRNA(Gln).</text>
</comment>
<comment type="catalytic activity">
    <reaction evidence="1">
        <text>L-glutamyl-tRNA(Gln) + L-glutamine + ATP + H2O = L-glutaminyl-tRNA(Gln) + L-glutamate + ADP + phosphate + H(+)</text>
        <dbReference type="Rhea" id="RHEA:17521"/>
        <dbReference type="Rhea" id="RHEA-COMP:9681"/>
        <dbReference type="Rhea" id="RHEA-COMP:9684"/>
        <dbReference type="ChEBI" id="CHEBI:15377"/>
        <dbReference type="ChEBI" id="CHEBI:15378"/>
        <dbReference type="ChEBI" id="CHEBI:29985"/>
        <dbReference type="ChEBI" id="CHEBI:30616"/>
        <dbReference type="ChEBI" id="CHEBI:43474"/>
        <dbReference type="ChEBI" id="CHEBI:58359"/>
        <dbReference type="ChEBI" id="CHEBI:78520"/>
        <dbReference type="ChEBI" id="CHEBI:78521"/>
        <dbReference type="ChEBI" id="CHEBI:456216"/>
    </reaction>
</comment>
<comment type="catalytic activity">
    <reaction evidence="1">
        <text>L-aspartyl-tRNA(Asn) + L-glutamine + ATP + H2O = L-asparaginyl-tRNA(Asn) + L-glutamate + ADP + phosphate + 2 H(+)</text>
        <dbReference type="Rhea" id="RHEA:14513"/>
        <dbReference type="Rhea" id="RHEA-COMP:9674"/>
        <dbReference type="Rhea" id="RHEA-COMP:9677"/>
        <dbReference type="ChEBI" id="CHEBI:15377"/>
        <dbReference type="ChEBI" id="CHEBI:15378"/>
        <dbReference type="ChEBI" id="CHEBI:29985"/>
        <dbReference type="ChEBI" id="CHEBI:30616"/>
        <dbReference type="ChEBI" id="CHEBI:43474"/>
        <dbReference type="ChEBI" id="CHEBI:58359"/>
        <dbReference type="ChEBI" id="CHEBI:78515"/>
        <dbReference type="ChEBI" id="CHEBI:78516"/>
        <dbReference type="ChEBI" id="CHEBI:456216"/>
    </reaction>
</comment>
<comment type="subunit">
    <text evidence="1">Heterotrimer of A, B and C subunits.</text>
</comment>
<comment type="similarity">
    <text evidence="1">Belongs to the GatB/GatE family. GatB subfamily.</text>
</comment>
<accession>Q1CTL2</accession>
<organism>
    <name type="scientific">Helicobacter pylori (strain HPAG1)</name>
    <dbReference type="NCBI Taxonomy" id="357544"/>
    <lineage>
        <taxon>Bacteria</taxon>
        <taxon>Pseudomonadati</taxon>
        <taxon>Campylobacterota</taxon>
        <taxon>Epsilonproteobacteria</taxon>
        <taxon>Campylobacterales</taxon>
        <taxon>Helicobacteraceae</taxon>
        <taxon>Helicobacter</taxon>
    </lineage>
</organism>
<dbReference type="EC" id="6.3.5.-" evidence="1"/>
<dbReference type="EMBL" id="CP000241">
    <property type="protein sequence ID" value="ABF84710.1"/>
    <property type="molecule type" value="Genomic_DNA"/>
</dbReference>
<dbReference type="SMR" id="Q1CTL2"/>
<dbReference type="KEGG" id="hpa:HPAG1_0643"/>
<dbReference type="HOGENOM" id="CLU_019240_0_0_7"/>
<dbReference type="GO" id="GO:0050566">
    <property type="term" value="F:asparaginyl-tRNA synthase (glutamine-hydrolyzing) activity"/>
    <property type="evidence" value="ECO:0007669"/>
    <property type="project" value="RHEA"/>
</dbReference>
<dbReference type="GO" id="GO:0005524">
    <property type="term" value="F:ATP binding"/>
    <property type="evidence" value="ECO:0007669"/>
    <property type="project" value="UniProtKB-KW"/>
</dbReference>
<dbReference type="GO" id="GO:0050567">
    <property type="term" value="F:glutaminyl-tRNA synthase (glutamine-hydrolyzing) activity"/>
    <property type="evidence" value="ECO:0007669"/>
    <property type="project" value="UniProtKB-UniRule"/>
</dbReference>
<dbReference type="GO" id="GO:0070681">
    <property type="term" value="P:glutaminyl-tRNAGln biosynthesis via transamidation"/>
    <property type="evidence" value="ECO:0007669"/>
    <property type="project" value="TreeGrafter"/>
</dbReference>
<dbReference type="GO" id="GO:0006412">
    <property type="term" value="P:translation"/>
    <property type="evidence" value="ECO:0007669"/>
    <property type="project" value="UniProtKB-UniRule"/>
</dbReference>
<dbReference type="FunFam" id="1.10.10.410:FF:000001">
    <property type="entry name" value="Aspartyl/glutamyl-tRNA(Asn/Gln) amidotransferase subunit B"/>
    <property type="match status" value="1"/>
</dbReference>
<dbReference type="Gene3D" id="1.10.10.410">
    <property type="match status" value="1"/>
</dbReference>
<dbReference type="Gene3D" id="1.10.150.380">
    <property type="entry name" value="GatB domain, N-terminal subdomain"/>
    <property type="match status" value="1"/>
</dbReference>
<dbReference type="HAMAP" id="MF_00121">
    <property type="entry name" value="GatB"/>
    <property type="match status" value="1"/>
</dbReference>
<dbReference type="InterPro" id="IPR017959">
    <property type="entry name" value="Asn/Gln-tRNA_amidoTrfase_suB/E"/>
</dbReference>
<dbReference type="InterPro" id="IPR006075">
    <property type="entry name" value="Asn/Gln-tRNA_Trfase_suB/E_cat"/>
</dbReference>
<dbReference type="InterPro" id="IPR018027">
    <property type="entry name" value="Asn/Gln_amidotransferase"/>
</dbReference>
<dbReference type="InterPro" id="IPR003789">
    <property type="entry name" value="Asn/Gln_tRNA_amidoTrase-B-like"/>
</dbReference>
<dbReference type="InterPro" id="IPR004413">
    <property type="entry name" value="GatB"/>
</dbReference>
<dbReference type="InterPro" id="IPR042114">
    <property type="entry name" value="GatB_C_1"/>
</dbReference>
<dbReference type="InterPro" id="IPR023168">
    <property type="entry name" value="GatB_Yqey_C_2"/>
</dbReference>
<dbReference type="InterPro" id="IPR017958">
    <property type="entry name" value="Gln-tRNA_amidoTrfase_suB_CS"/>
</dbReference>
<dbReference type="InterPro" id="IPR014746">
    <property type="entry name" value="Gln_synth/guanido_kin_cat_dom"/>
</dbReference>
<dbReference type="NCBIfam" id="TIGR00133">
    <property type="entry name" value="gatB"/>
    <property type="match status" value="1"/>
</dbReference>
<dbReference type="NCBIfam" id="NF004012">
    <property type="entry name" value="PRK05477.1-2"/>
    <property type="match status" value="1"/>
</dbReference>
<dbReference type="NCBIfam" id="NF004014">
    <property type="entry name" value="PRK05477.1-4"/>
    <property type="match status" value="1"/>
</dbReference>
<dbReference type="PANTHER" id="PTHR11659">
    <property type="entry name" value="GLUTAMYL-TRNA GLN AMIDOTRANSFERASE SUBUNIT B MITOCHONDRIAL AND PROKARYOTIC PET112-RELATED"/>
    <property type="match status" value="1"/>
</dbReference>
<dbReference type="PANTHER" id="PTHR11659:SF0">
    <property type="entry name" value="GLUTAMYL-TRNA(GLN) AMIDOTRANSFERASE SUBUNIT B, MITOCHONDRIAL"/>
    <property type="match status" value="1"/>
</dbReference>
<dbReference type="Pfam" id="PF02934">
    <property type="entry name" value="GatB_N"/>
    <property type="match status" value="1"/>
</dbReference>
<dbReference type="Pfam" id="PF02637">
    <property type="entry name" value="GatB_Yqey"/>
    <property type="match status" value="1"/>
</dbReference>
<dbReference type="SMART" id="SM00845">
    <property type="entry name" value="GatB_Yqey"/>
    <property type="match status" value="1"/>
</dbReference>
<dbReference type="SUPFAM" id="SSF89095">
    <property type="entry name" value="GatB/YqeY motif"/>
    <property type="match status" value="1"/>
</dbReference>
<dbReference type="SUPFAM" id="SSF55931">
    <property type="entry name" value="Glutamine synthetase/guanido kinase"/>
    <property type="match status" value="1"/>
</dbReference>
<dbReference type="PROSITE" id="PS01234">
    <property type="entry name" value="GATB"/>
    <property type="match status" value="1"/>
</dbReference>
<keyword id="KW-0067">ATP-binding</keyword>
<keyword id="KW-0436">Ligase</keyword>
<keyword id="KW-0547">Nucleotide-binding</keyword>
<keyword id="KW-0648">Protein biosynthesis</keyword>